<reference key="1">
    <citation type="journal article" date="2010" name="PLoS ONE">
        <title>Genome sequence of Cronobacter sakazakii BAA-894 and comparative genomic hybridization analysis with other Cronobacter species.</title>
        <authorList>
            <person name="Kucerova E."/>
            <person name="Clifton S.W."/>
            <person name="Xia X.Q."/>
            <person name="Long F."/>
            <person name="Porwollik S."/>
            <person name="Fulton L."/>
            <person name="Fronick C."/>
            <person name="Minx P."/>
            <person name="Kyung K."/>
            <person name="Warren W."/>
            <person name="Fulton R."/>
            <person name="Feng D."/>
            <person name="Wollam A."/>
            <person name="Shah N."/>
            <person name="Bhonagiri V."/>
            <person name="Nash W.E."/>
            <person name="Hallsworth-Pepin K."/>
            <person name="Wilson R.K."/>
            <person name="McClelland M."/>
            <person name="Forsythe S.J."/>
        </authorList>
    </citation>
    <scope>NUCLEOTIDE SEQUENCE [LARGE SCALE GENOMIC DNA]</scope>
    <source>
        <strain>ATCC BAA-894</strain>
    </source>
</reference>
<accession>A7MI12</accession>
<protein>
    <recommendedName>
        <fullName evidence="1">L-alanine exporter AlaE</fullName>
    </recommendedName>
</protein>
<sequence length="158" mass="17357">MSQELNSMFSPHSRLRHAVADTFAMVVYCSVVGMMIEIFVSGMSFEQSLSSRLVAIPVNMVIAWPYGLYRDAVMRLAARVGKGRLVRNLADVIAYITFQSPVYAAILLFVGADIPQIITAVSSNIVVSMMMGAAYGYFLDYCRRLFRVSPAAPVSAQA</sequence>
<comment type="function">
    <text evidence="1">Exports L-alanine.</text>
</comment>
<comment type="subcellular location">
    <subcellularLocation>
        <location evidence="1">Cell inner membrane</location>
        <topology evidence="1">Multi-pass membrane protein</topology>
    </subcellularLocation>
</comment>
<comment type="similarity">
    <text evidence="1">Belongs to the AlaE exporter family.</text>
</comment>
<proteinExistence type="inferred from homology"/>
<keyword id="KW-0029">Amino-acid transport</keyword>
<keyword id="KW-0997">Cell inner membrane</keyword>
<keyword id="KW-1003">Cell membrane</keyword>
<keyword id="KW-0472">Membrane</keyword>
<keyword id="KW-1185">Reference proteome</keyword>
<keyword id="KW-0812">Transmembrane</keyword>
<keyword id="KW-1133">Transmembrane helix</keyword>
<keyword id="KW-0813">Transport</keyword>
<feature type="chain" id="PRO_0000415620" description="L-alanine exporter AlaE">
    <location>
        <begin position="1"/>
        <end position="158"/>
    </location>
</feature>
<feature type="transmembrane region" description="Helical" evidence="1">
    <location>
        <begin position="23"/>
        <end position="43"/>
    </location>
</feature>
<feature type="transmembrane region" description="Helical" evidence="1">
    <location>
        <begin position="53"/>
        <end position="73"/>
    </location>
</feature>
<feature type="transmembrane region" description="Helical" evidence="1">
    <location>
        <begin position="92"/>
        <end position="112"/>
    </location>
</feature>
<feature type="transmembrane region" description="Helical" evidence="1">
    <location>
        <begin position="117"/>
        <end position="137"/>
    </location>
</feature>
<organism>
    <name type="scientific">Cronobacter sakazakii (strain ATCC BAA-894)</name>
    <name type="common">Enterobacter sakazakii</name>
    <dbReference type="NCBI Taxonomy" id="290339"/>
    <lineage>
        <taxon>Bacteria</taxon>
        <taxon>Pseudomonadati</taxon>
        <taxon>Pseudomonadota</taxon>
        <taxon>Gammaproteobacteria</taxon>
        <taxon>Enterobacterales</taxon>
        <taxon>Enterobacteriaceae</taxon>
        <taxon>Cronobacter</taxon>
    </lineage>
</organism>
<dbReference type="EMBL" id="CP000783">
    <property type="protein sequence ID" value="ABU75881.1"/>
    <property type="molecule type" value="Genomic_DNA"/>
</dbReference>
<dbReference type="KEGG" id="esa:ESA_00597"/>
<dbReference type="HOGENOM" id="CLU_126493_0_0_6"/>
<dbReference type="Proteomes" id="UP000000260">
    <property type="component" value="Chromosome"/>
</dbReference>
<dbReference type="GO" id="GO:0005886">
    <property type="term" value="C:plasma membrane"/>
    <property type="evidence" value="ECO:0007669"/>
    <property type="project" value="UniProtKB-SubCell"/>
</dbReference>
<dbReference type="GO" id="GO:0034639">
    <property type="term" value="F:L-amino acid efflux transmembrane transporter activity"/>
    <property type="evidence" value="ECO:0007669"/>
    <property type="project" value="UniProtKB-UniRule"/>
</dbReference>
<dbReference type="GO" id="GO:0032973">
    <property type="term" value="P:amino acid export across plasma membrane"/>
    <property type="evidence" value="ECO:0007669"/>
    <property type="project" value="UniProtKB-UniRule"/>
</dbReference>
<dbReference type="HAMAP" id="MF_00914">
    <property type="entry name" value="L_Ala_exporter"/>
    <property type="match status" value="1"/>
</dbReference>
<dbReference type="InterPro" id="IPR010574">
    <property type="entry name" value="Ala_export_AlaE"/>
</dbReference>
<dbReference type="Pfam" id="PF06610">
    <property type="entry name" value="AlaE"/>
    <property type="match status" value="1"/>
</dbReference>
<evidence type="ECO:0000255" key="1">
    <source>
        <dbReference type="HAMAP-Rule" id="MF_00914"/>
    </source>
</evidence>
<gene>
    <name evidence="1" type="primary">alaE</name>
    <name type="ordered locus">ESA_00597</name>
</gene>
<name>ALAE_CROS8</name>